<accession>C0QPY2</accession>
<evidence type="ECO:0000255" key="1">
    <source>
        <dbReference type="HAMAP-Rule" id="MF_00046"/>
    </source>
</evidence>
<reference key="1">
    <citation type="journal article" date="2009" name="J. Bacteriol.">
        <title>Complete and draft genome sequences of six members of the Aquificales.</title>
        <authorList>
            <person name="Reysenbach A.-L."/>
            <person name="Hamamura N."/>
            <person name="Podar M."/>
            <person name="Griffiths E."/>
            <person name="Ferreira S."/>
            <person name="Hochstein R."/>
            <person name="Heidelberg J."/>
            <person name="Johnson J."/>
            <person name="Mead D."/>
            <person name="Pohorille A."/>
            <person name="Sarmiento M."/>
            <person name="Schweighofer K."/>
            <person name="Seshadri R."/>
            <person name="Voytek M.A."/>
        </authorList>
    </citation>
    <scope>NUCLEOTIDE SEQUENCE [LARGE SCALE GENOMIC DNA]</scope>
    <source>
        <strain>DSM 14350 / EX-H1</strain>
    </source>
</reference>
<sequence length="459" mass="50794">MFRGKVRHIHFIGIGGSGMNGIAQVLLNQGFTVTGSDLKESQTVINLKNMGAKIYIGHDPKNVDGADVVVYSSAVKQDNPELLRAKQLGIPTIPRGEMLAELMRFKYGIAIAGSHGKTTTTSMVGTILGKTGYDPTVVIGGKLEAYGSNAKLGSGDFIVTEADESDGSFLKLTPTIVSINNIDLEHIGFYKNLNDIKRAFIDFANKVPFYGAVAVNIDDQNIKDIIPEIEKKIIRFGISEDSDIRGYDLRLENGRYRFKVNDFGEIYLSIPGKHNVYNALAAISISVELGVPFCVIKEALENFKNANRRFEIKYDGSVTVIDDYAHHPTEIKATLSATREMFDGRRIIAVFQPHRYSRTFSLYDHFVRSFNIPDITVITEIFPAGESPIDSVNGEKLSSDIKKETGKTVLYGEDLQKTFNILKNILKKDDVLLILGAGNVTRLSDQISQFLKNKEGALR</sequence>
<comment type="function">
    <text evidence="1">Cell wall formation.</text>
</comment>
<comment type="catalytic activity">
    <reaction evidence="1">
        <text>UDP-N-acetyl-alpha-D-muramate + L-alanine + ATP = UDP-N-acetyl-alpha-D-muramoyl-L-alanine + ADP + phosphate + H(+)</text>
        <dbReference type="Rhea" id="RHEA:23372"/>
        <dbReference type="ChEBI" id="CHEBI:15378"/>
        <dbReference type="ChEBI" id="CHEBI:30616"/>
        <dbReference type="ChEBI" id="CHEBI:43474"/>
        <dbReference type="ChEBI" id="CHEBI:57972"/>
        <dbReference type="ChEBI" id="CHEBI:70757"/>
        <dbReference type="ChEBI" id="CHEBI:83898"/>
        <dbReference type="ChEBI" id="CHEBI:456216"/>
        <dbReference type="EC" id="6.3.2.8"/>
    </reaction>
</comment>
<comment type="pathway">
    <text evidence="1">Cell wall biogenesis; peptidoglycan biosynthesis.</text>
</comment>
<comment type="subcellular location">
    <subcellularLocation>
        <location evidence="1">Cytoplasm</location>
    </subcellularLocation>
</comment>
<comment type="similarity">
    <text evidence="1">Belongs to the MurCDEF family.</text>
</comment>
<proteinExistence type="inferred from homology"/>
<dbReference type="EC" id="6.3.2.8" evidence="1"/>
<dbReference type="EMBL" id="CP001230">
    <property type="protein sequence ID" value="ACO03488.1"/>
    <property type="molecule type" value="Genomic_DNA"/>
</dbReference>
<dbReference type="RefSeq" id="WP_012675727.1">
    <property type="nucleotide sequence ID" value="NC_012440.1"/>
</dbReference>
<dbReference type="SMR" id="C0QPY2"/>
<dbReference type="STRING" id="123214.PERMA_0941"/>
<dbReference type="PaxDb" id="123214-PERMA_0941"/>
<dbReference type="KEGG" id="pmx:PERMA_0941"/>
<dbReference type="eggNOG" id="COG0773">
    <property type="taxonomic scope" value="Bacteria"/>
</dbReference>
<dbReference type="HOGENOM" id="CLU_028104_2_2_0"/>
<dbReference type="OrthoDB" id="9804126at2"/>
<dbReference type="UniPathway" id="UPA00219"/>
<dbReference type="Proteomes" id="UP000001366">
    <property type="component" value="Chromosome"/>
</dbReference>
<dbReference type="GO" id="GO:0005737">
    <property type="term" value="C:cytoplasm"/>
    <property type="evidence" value="ECO:0007669"/>
    <property type="project" value="UniProtKB-SubCell"/>
</dbReference>
<dbReference type="GO" id="GO:0005524">
    <property type="term" value="F:ATP binding"/>
    <property type="evidence" value="ECO:0007669"/>
    <property type="project" value="UniProtKB-UniRule"/>
</dbReference>
<dbReference type="GO" id="GO:0008763">
    <property type="term" value="F:UDP-N-acetylmuramate-L-alanine ligase activity"/>
    <property type="evidence" value="ECO:0007669"/>
    <property type="project" value="UniProtKB-UniRule"/>
</dbReference>
<dbReference type="GO" id="GO:0051301">
    <property type="term" value="P:cell division"/>
    <property type="evidence" value="ECO:0007669"/>
    <property type="project" value="UniProtKB-KW"/>
</dbReference>
<dbReference type="GO" id="GO:0071555">
    <property type="term" value="P:cell wall organization"/>
    <property type="evidence" value="ECO:0007669"/>
    <property type="project" value="UniProtKB-KW"/>
</dbReference>
<dbReference type="GO" id="GO:0009252">
    <property type="term" value="P:peptidoglycan biosynthetic process"/>
    <property type="evidence" value="ECO:0007669"/>
    <property type="project" value="UniProtKB-UniRule"/>
</dbReference>
<dbReference type="GO" id="GO:0008360">
    <property type="term" value="P:regulation of cell shape"/>
    <property type="evidence" value="ECO:0007669"/>
    <property type="project" value="UniProtKB-KW"/>
</dbReference>
<dbReference type="Gene3D" id="3.90.190.20">
    <property type="entry name" value="Mur ligase, C-terminal domain"/>
    <property type="match status" value="1"/>
</dbReference>
<dbReference type="Gene3D" id="3.40.1190.10">
    <property type="entry name" value="Mur-like, catalytic domain"/>
    <property type="match status" value="1"/>
</dbReference>
<dbReference type="Gene3D" id="3.40.50.720">
    <property type="entry name" value="NAD(P)-binding Rossmann-like Domain"/>
    <property type="match status" value="1"/>
</dbReference>
<dbReference type="HAMAP" id="MF_00046">
    <property type="entry name" value="MurC"/>
    <property type="match status" value="1"/>
</dbReference>
<dbReference type="InterPro" id="IPR036565">
    <property type="entry name" value="Mur-like_cat_sf"/>
</dbReference>
<dbReference type="InterPro" id="IPR004101">
    <property type="entry name" value="Mur_ligase_C"/>
</dbReference>
<dbReference type="InterPro" id="IPR036615">
    <property type="entry name" value="Mur_ligase_C_dom_sf"/>
</dbReference>
<dbReference type="InterPro" id="IPR013221">
    <property type="entry name" value="Mur_ligase_cen"/>
</dbReference>
<dbReference type="InterPro" id="IPR000713">
    <property type="entry name" value="Mur_ligase_N"/>
</dbReference>
<dbReference type="InterPro" id="IPR050061">
    <property type="entry name" value="MurCDEF_pg_biosynth"/>
</dbReference>
<dbReference type="InterPro" id="IPR005758">
    <property type="entry name" value="UDP-N-AcMur_Ala_ligase_MurC"/>
</dbReference>
<dbReference type="NCBIfam" id="TIGR01082">
    <property type="entry name" value="murC"/>
    <property type="match status" value="1"/>
</dbReference>
<dbReference type="PANTHER" id="PTHR43445:SF3">
    <property type="entry name" value="UDP-N-ACETYLMURAMATE--L-ALANINE LIGASE"/>
    <property type="match status" value="1"/>
</dbReference>
<dbReference type="PANTHER" id="PTHR43445">
    <property type="entry name" value="UDP-N-ACETYLMURAMATE--L-ALANINE LIGASE-RELATED"/>
    <property type="match status" value="1"/>
</dbReference>
<dbReference type="Pfam" id="PF01225">
    <property type="entry name" value="Mur_ligase"/>
    <property type="match status" value="1"/>
</dbReference>
<dbReference type="Pfam" id="PF02875">
    <property type="entry name" value="Mur_ligase_C"/>
    <property type="match status" value="1"/>
</dbReference>
<dbReference type="Pfam" id="PF08245">
    <property type="entry name" value="Mur_ligase_M"/>
    <property type="match status" value="1"/>
</dbReference>
<dbReference type="SUPFAM" id="SSF51984">
    <property type="entry name" value="MurCD N-terminal domain"/>
    <property type="match status" value="1"/>
</dbReference>
<dbReference type="SUPFAM" id="SSF53623">
    <property type="entry name" value="MurD-like peptide ligases, catalytic domain"/>
    <property type="match status" value="1"/>
</dbReference>
<dbReference type="SUPFAM" id="SSF53244">
    <property type="entry name" value="MurD-like peptide ligases, peptide-binding domain"/>
    <property type="match status" value="1"/>
</dbReference>
<protein>
    <recommendedName>
        <fullName evidence="1">UDP-N-acetylmuramate--L-alanine ligase</fullName>
        <ecNumber evidence="1">6.3.2.8</ecNumber>
    </recommendedName>
    <alternativeName>
        <fullName evidence="1">UDP-N-acetylmuramoyl-L-alanine synthetase</fullName>
    </alternativeName>
</protein>
<gene>
    <name evidence="1" type="primary">murC</name>
    <name type="ordered locus">PERMA_0941</name>
</gene>
<name>MURC_PERMH</name>
<organism>
    <name type="scientific">Persephonella marina (strain DSM 14350 / EX-H1)</name>
    <dbReference type="NCBI Taxonomy" id="123214"/>
    <lineage>
        <taxon>Bacteria</taxon>
        <taxon>Pseudomonadati</taxon>
        <taxon>Aquificota</taxon>
        <taxon>Aquificia</taxon>
        <taxon>Aquificales</taxon>
        <taxon>Hydrogenothermaceae</taxon>
        <taxon>Persephonella</taxon>
    </lineage>
</organism>
<feature type="chain" id="PRO_1000192104" description="UDP-N-acetylmuramate--L-alanine ligase">
    <location>
        <begin position="1"/>
        <end position="459"/>
    </location>
</feature>
<feature type="binding site" evidence="1">
    <location>
        <begin position="113"/>
        <end position="119"/>
    </location>
    <ligand>
        <name>ATP</name>
        <dbReference type="ChEBI" id="CHEBI:30616"/>
    </ligand>
</feature>
<keyword id="KW-0067">ATP-binding</keyword>
<keyword id="KW-0131">Cell cycle</keyword>
<keyword id="KW-0132">Cell division</keyword>
<keyword id="KW-0133">Cell shape</keyword>
<keyword id="KW-0961">Cell wall biogenesis/degradation</keyword>
<keyword id="KW-0963">Cytoplasm</keyword>
<keyword id="KW-0436">Ligase</keyword>
<keyword id="KW-0547">Nucleotide-binding</keyword>
<keyword id="KW-0573">Peptidoglycan synthesis</keyword>
<keyword id="KW-1185">Reference proteome</keyword>